<accession>Q4W9V1</accession>
<comment type="function">
    <text evidence="2 3 8 9">Sterol 24-C-methyltransferase; part of the third module of ergosterol biosynthesis pathway that includes the late steps of the pathway (PubMed:18191972, PubMed:28224386). Methylates lanosterol at C-24 to produce eburicol (PubMed:18191972, PubMed:28224386). The third module or late pathway involves the ergosterol synthesis itself through consecutive reactions that mainly occur in the endoplasmic reticulum (ER) membrane. Firstly, the squalene synthase erg9 catalyzes the condensation of 2 farnesyl pyrophosphate moieties to form squalene, which is the precursor of all steroids. Squalene synthase is crucial for balancing the incorporation of farnesyl diphosphate (FPP) into sterol and nonsterol isoprene synthesis. Secondly, squalene is converted into lanosterol by the consecutive action of the squalene epoxidase erg1 and the lanosterol synthase erg7. Then, the delta(24)-sterol C-methyltransferase erg6 methylates lanosterol at C-24 to produce eburicol. Eburicol is the substrate of the sterol 14-alpha demethylase encoded by cyp51A and cyp51B, to yield 4,4,24-trimethyl ergosta-8,14,24(28)-trienol. The C-14 reductase erg24 then reduces the C14=C15 double bond which leads to 4,4-dimethylfecosterol. A sequence of further demethylations at C-4, involving the C-4 demethylation complex containing the C-4 methylsterol oxidases erg25A or erg25B, the sterol-4-alpha-carboxylate 3-dehydrogenase erg26 and the 3-keto-steroid reductase erg27, leads to the production of fecosterol via 4-methylfecosterol. The C-8 sterol isomerase erg2 then catalyzes the reaction which results in unsaturation at C-7 in the B ring of sterols and thus converts fecosterol to episterol. The sterol-C5-desaturase erg3B then catalyzes the introduction of a C-5 double bond in the B ring to produce 5-dehydroepisterol. The 2 other sterol-C5-desaturases, erg3A and erg3C, seem to be less important in ergosterol biosynthesis. The C-22 sterol desaturase erg5 further converts 5-dehydroepisterol into ergosta-5,7,22,24(28)-tetraen-3beta-ol by forming the C-22(23) double bond in the sterol side chain. Finally, ergosta-5,7,22,24(28)-tetraen-3beta-ol is substrate of the C-24(28) sterol reductases erg4A and erg4B to produce ergosterol. Possible alternative sterol biosynthetic pathways might exist from fecosterol to ergosterol, depending on the activities of the erg3 isoforms (Probable) (PubMed:16110826, PubMed:18191972).</text>
</comment>
<comment type="catalytic activity">
    <reaction evidence="3">
        <text>lanosterol + S-adenosyl-L-methionine = eburicol + S-adenosyl-L-homocysteine + H(+)</text>
        <dbReference type="Rhea" id="RHEA:52652"/>
        <dbReference type="ChEBI" id="CHEBI:15378"/>
        <dbReference type="ChEBI" id="CHEBI:16521"/>
        <dbReference type="ChEBI" id="CHEBI:57856"/>
        <dbReference type="ChEBI" id="CHEBI:59789"/>
        <dbReference type="ChEBI" id="CHEBI:70315"/>
    </reaction>
    <physiologicalReaction direction="left-to-right" evidence="3">
        <dbReference type="Rhea" id="RHEA:52653"/>
    </physiologicalReaction>
</comment>
<comment type="activity regulation">
    <text evidence="3">Specific and total activity is decreased in presence of alpha-bisabolol.</text>
</comment>
<comment type="pathway">
    <text evidence="8 9">Steroid metabolism; ergosterol biosynthesis.</text>
</comment>
<comment type="subcellular location">
    <subcellularLocation>
        <location evidence="1">Microsome</location>
    </subcellularLocation>
    <subcellularLocation>
        <location evidence="1">Mitochondrion</location>
    </subcellularLocation>
</comment>
<comment type="induction">
    <text evidence="3">Expression is significantly suppressed in the presence of alpha-bisabolol.</text>
</comment>
<comment type="miscellaneous">
    <text evidence="9">In Aspergillus, the biosynthesis pathway of the sterol precursors leading to the prevalent sterol ergosterol differs from yeast. The ringsystem of lanosterol in S.cerevisiae is firstly demethylised in three enzymatic steps leading to the intermediate zymosterol and secondly a methyl group is added to zymosterol by the sterol 24-C-methyltransferase to form fecosterol. In Aspergillus, lanosterol is firstly transmethylated by the sterol 24-C-methyltransferase leading to the intermediate eburicol and secondly demethylated in three steps to form fecosterol.</text>
</comment>
<comment type="similarity">
    <text evidence="7">Belongs to the class I-like SAM-binding methyltransferase superfamily. Erg6/SMT family.</text>
</comment>
<evidence type="ECO:0000250" key="1">
    <source>
        <dbReference type="UniProtKB" id="P32352"/>
    </source>
</evidence>
<evidence type="ECO:0000269" key="2">
    <source>
    </source>
</evidence>
<evidence type="ECO:0000269" key="3">
    <source>
    </source>
</evidence>
<evidence type="ECO:0000303" key="4">
    <source>
    </source>
</evidence>
<evidence type="ECO:0000303" key="5">
    <source>
    </source>
</evidence>
<evidence type="ECO:0000303" key="6">
    <source>
    </source>
</evidence>
<evidence type="ECO:0000305" key="7"/>
<evidence type="ECO:0000305" key="8">
    <source>
    </source>
</evidence>
<evidence type="ECO:0000305" key="9">
    <source>
    </source>
</evidence>
<protein>
    <recommendedName>
        <fullName evidence="7">Sterol 24-C-methyltransferase erg6</fullName>
        <ecNumber evidence="3">2.1.1.-</ecNumber>
    </recommendedName>
    <alternativeName>
        <fullName evidence="6">Delta(24)-sterol C-methyltransferase erg6</fullName>
        <shortName evidence="6">24-SMT</shortName>
    </alternativeName>
    <alternativeName>
        <fullName evidence="5">Ergosterol biosynthesis protein 6</fullName>
    </alternativeName>
    <alternativeName>
        <fullName evidence="7">S-adenosyl-L-methionine:sterol C-24 methyl transferase erg6</fullName>
        <shortName>SAM:SMT</shortName>
    </alternativeName>
</protein>
<proteinExistence type="evidence at protein level"/>
<sequence>MAPVALEQENHLRDAEFNRAMHGKSAQFRGGFAALRGKDSAAQKAAVDEYFKHWDNKPAEDETEETRAARRAEYATLTRHYYNLATDLYEYGWGTSFHFCRFAQGEPFYQAIARHEHYLAHQMGIKEGMKVLDVGCGVGGPAREIVKFTDANVVGLNNNDYQIERATRYAEREGLSHKLSFVKGDFMQMKFPDNSFDAVYAIEATVHAPDLEGVYKEIFRVLKPGGVFGVYEWLMTDAYDNDNPEHRRIRLGIELGDGISNMVKVSEGLTAFKNAGFELLHNEDLADRPDAIPWYYPLAGSFKHMTSPWDFFTIARMTWWGRGIAHRFCGAMETIGLFPKGTQKTADSLAIAGDCLVAGGEKKLFTPMYLMVGRKPE</sequence>
<dbReference type="EC" id="2.1.1.-" evidence="3"/>
<dbReference type="EMBL" id="AAHF01000016">
    <property type="protein sequence ID" value="EAL84512.1"/>
    <property type="molecule type" value="Genomic_DNA"/>
</dbReference>
<dbReference type="RefSeq" id="XP_746550.1">
    <property type="nucleotide sequence ID" value="XM_741457.1"/>
</dbReference>
<dbReference type="SMR" id="Q4W9V1"/>
<dbReference type="FunCoup" id="Q4W9V1">
    <property type="interactions" value="306"/>
</dbReference>
<dbReference type="STRING" id="330879.Q4W9V1"/>
<dbReference type="EnsemblFungi" id="EAL84512">
    <property type="protein sequence ID" value="EAL84512"/>
    <property type="gene ID" value="AFUA_4G03630"/>
</dbReference>
<dbReference type="GeneID" id="3504016"/>
<dbReference type="KEGG" id="afm:AFUA_4G03630"/>
<dbReference type="VEuPathDB" id="FungiDB:Afu4g03630"/>
<dbReference type="eggNOG" id="KOG1269">
    <property type="taxonomic scope" value="Eukaryota"/>
</dbReference>
<dbReference type="HOGENOM" id="CLU_039068_5_3_1"/>
<dbReference type="InParanoid" id="Q4W9V1"/>
<dbReference type="OMA" id="AFNKAMH"/>
<dbReference type="OrthoDB" id="540004at2759"/>
<dbReference type="UniPathway" id="UPA00768"/>
<dbReference type="Proteomes" id="UP000002530">
    <property type="component" value="Chromosome 4"/>
</dbReference>
<dbReference type="GO" id="GO:0005783">
    <property type="term" value="C:endoplasmic reticulum"/>
    <property type="evidence" value="ECO:0000318"/>
    <property type="project" value="GO_Central"/>
</dbReference>
<dbReference type="GO" id="GO:0005811">
    <property type="term" value="C:lipid droplet"/>
    <property type="evidence" value="ECO:0007669"/>
    <property type="project" value="EnsemblFungi"/>
</dbReference>
<dbReference type="GO" id="GO:0005739">
    <property type="term" value="C:mitochondrion"/>
    <property type="evidence" value="ECO:0007669"/>
    <property type="project" value="UniProtKB-SubCell"/>
</dbReference>
<dbReference type="GO" id="GO:0042802">
    <property type="term" value="F:identical protein binding"/>
    <property type="evidence" value="ECO:0007669"/>
    <property type="project" value="EnsemblFungi"/>
</dbReference>
<dbReference type="GO" id="GO:0003838">
    <property type="term" value="F:sterol 24-C-methyltransferase activity"/>
    <property type="evidence" value="ECO:0000318"/>
    <property type="project" value="GO_Central"/>
</dbReference>
<dbReference type="GO" id="GO:0006696">
    <property type="term" value="P:ergosterol biosynthetic process"/>
    <property type="evidence" value="ECO:0000318"/>
    <property type="project" value="GO_Central"/>
</dbReference>
<dbReference type="GO" id="GO:0032259">
    <property type="term" value="P:methylation"/>
    <property type="evidence" value="ECO:0007669"/>
    <property type="project" value="UniProtKB-KW"/>
</dbReference>
<dbReference type="CDD" id="cd02440">
    <property type="entry name" value="AdoMet_MTases"/>
    <property type="match status" value="1"/>
</dbReference>
<dbReference type="FunFam" id="3.40.50.150:FF:000121">
    <property type="entry name" value="Sterol 24-C-methyltransferase"/>
    <property type="match status" value="1"/>
</dbReference>
<dbReference type="Gene3D" id="3.40.50.150">
    <property type="entry name" value="Vaccinia Virus protein VP39"/>
    <property type="match status" value="1"/>
</dbReference>
<dbReference type="InterPro" id="IPR050447">
    <property type="entry name" value="Erg6_SMT_methyltransf"/>
</dbReference>
<dbReference type="InterPro" id="IPR013216">
    <property type="entry name" value="Methyltransf_11"/>
</dbReference>
<dbReference type="InterPro" id="IPR030384">
    <property type="entry name" value="MeTrfase_SMT"/>
</dbReference>
<dbReference type="InterPro" id="IPR029063">
    <property type="entry name" value="SAM-dependent_MTases_sf"/>
</dbReference>
<dbReference type="InterPro" id="IPR013705">
    <property type="entry name" value="Sterol_MeTrfase_C"/>
</dbReference>
<dbReference type="PANTHER" id="PTHR44068:SF1">
    <property type="entry name" value="HYPOTHETICAL LOC100005854"/>
    <property type="match status" value="1"/>
</dbReference>
<dbReference type="PANTHER" id="PTHR44068">
    <property type="entry name" value="ZGC:194242"/>
    <property type="match status" value="1"/>
</dbReference>
<dbReference type="Pfam" id="PF08241">
    <property type="entry name" value="Methyltransf_11"/>
    <property type="match status" value="1"/>
</dbReference>
<dbReference type="Pfam" id="PF08498">
    <property type="entry name" value="Sterol_MT_C"/>
    <property type="match status" value="1"/>
</dbReference>
<dbReference type="SUPFAM" id="SSF53335">
    <property type="entry name" value="S-adenosyl-L-methionine-dependent methyltransferases"/>
    <property type="match status" value="1"/>
</dbReference>
<dbReference type="PROSITE" id="PS51685">
    <property type="entry name" value="SAM_MT_ERG6_SMT"/>
    <property type="match status" value="1"/>
</dbReference>
<keyword id="KW-0256">Endoplasmic reticulum</keyword>
<keyword id="KW-0444">Lipid biosynthesis</keyword>
<keyword id="KW-0443">Lipid metabolism</keyword>
<keyword id="KW-0489">Methyltransferase</keyword>
<keyword id="KW-0492">Microsome</keyword>
<keyword id="KW-0496">Mitochondrion</keyword>
<keyword id="KW-1185">Reference proteome</keyword>
<keyword id="KW-0949">S-adenosyl-L-methionine</keyword>
<keyword id="KW-0752">Steroid biosynthesis</keyword>
<keyword id="KW-0753">Steroid metabolism</keyword>
<keyword id="KW-0756">Sterol biosynthesis</keyword>
<keyword id="KW-1207">Sterol metabolism</keyword>
<keyword id="KW-0808">Transferase</keyword>
<organism>
    <name type="scientific">Aspergillus fumigatus (strain ATCC MYA-4609 / CBS 101355 / FGSC A1100 / Af293)</name>
    <name type="common">Neosartorya fumigata</name>
    <dbReference type="NCBI Taxonomy" id="330879"/>
    <lineage>
        <taxon>Eukaryota</taxon>
        <taxon>Fungi</taxon>
        <taxon>Dikarya</taxon>
        <taxon>Ascomycota</taxon>
        <taxon>Pezizomycotina</taxon>
        <taxon>Eurotiomycetes</taxon>
        <taxon>Eurotiomycetidae</taxon>
        <taxon>Eurotiales</taxon>
        <taxon>Aspergillaceae</taxon>
        <taxon>Aspergillus</taxon>
        <taxon>Aspergillus subgen. Fumigati</taxon>
    </lineage>
</organism>
<name>ERG6_ASPFU</name>
<reference key="1">
    <citation type="journal article" date="2005" name="Nature">
        <title>Genomic sequence of the pathogenic and allergenic filamentous fungus Aspergillus fumigatus.</title>
        <authorList>
            <person name="Nierman W.C."/>
            <person name="Pain A."/>
            <person name="Anderson M.J."/>
            <person name="Wortman J.R."/>
            <person name="Kim H.S."/>
            <person name="Arroyo J."/>
            <person name="Berriman M."/>
            <person name="Abe K."/>
            <person name="Archer D.B."/>
            <person name="Bermejo C."/>
            <person name="Bennett J.W."/>
            <person name="Bowyer P."/>
            <person name="Chen D."/>
            <person name="Collins M."/>
            <person name="Coulsen R."/>
            <person name="Davies R."/>
            <person name="Dyer P.S."/>
            <person name="Farman M.L."/>
            <person name="Fedorova N."/>
            <person name="Fedorova N.D."/>
            <person name="Feldblyum T.V."/>
            <person name="Fischer R."/>
            <person name="Fosker N."/>
            <person name="Fraser A."/>
            <person name="Garcia J.L."/>
            <person name="Garcia M.J."/>
            <person name="Goble A."/>
            <person name="Goldman G.H."/>
            <person name="Gomi K."/>
            <person name="Griffith-Jones S."/>
            <person name="Gwilliam R."/>
            <person name="Haas B.J."/>
            <person name="Haas H."/>
            <person name="Harris D.E."/>
            <person name="Horiuchi H."/>
            <person name="Huang J."/>
            <person name="Humphray S."/>
            <person name="Jimenez J."/>
            <person name="Keller N."/>
            <person name="Khouri H."/>
            <person name="Kitamoto K."/>
            <person name="Kobayashi T."/>
            <person name="Konzack S."/>
            <person name="Kulkarni R."/>
            <person name="Kumagai T."/>
            <person name="Lafton A."/>
            <person name="Latge J.-P."/>
            <person name="Li W."/>
            <person name="Lord A."/>
            <person name="Lu C."/>
            <person name="Majoros W.H."/>
            <person name="May G.S."/>
            <person name="Miller B.L."/>
            <person name="Mohamoud Y."/>
            <person name="Molina M."/>
            <person name="Monod M."/>
            <person name="Mouyna I."/>
            <person name="Mulligan S."/>
            <person name="Murphy L.D."/>
            <person name="O'Neil S."/>
            <person name="Paulsen I."/>
            <person name="Penalva M.A."/>
            <person name="Pertea M."/>
            <person name="Price C."/>
            <person name="Pritchard B.L."/>
            <person name="Quail M.A."/>
            <person name="Rabbinowitsch E."/>
            <person name="Rawlins N."/>
            <person name="Rajandream M.A."/>
            <person name="Reichard U."/>
            <person name="Renauld H."/>
            <person name="Robson G.D."/>
            <person name="Rodriguez de Cordoba S."/>
            <person name="Rodriguez-Pena J.M."/>
            <person name="Ronning C.M."/>
            <person name="Rutter S."/>
            <person name="Salzberg S.L."/>
            <person name="Sanchez M."/>
            <person name="Sanchez-Ferrero J.C."/>
            <person name="Saunders D."/>
            <person name="Seeger K."/>
            <person name="Squares R."/>
            <person name="Squares S."/>
            <person name="Takeuchi M."/>
            <person name="Tekaia F."/>
            <person name="Turner G."/>
            <person name="Vazquez de Aldana C.R."/>
            <person name="Weidman J."/>
            <person name="White O."/>
            <person name="Woodward J.R."/>
            <person name="Yu J.-H."/>
            <person name="Fraser C.M."/>
            <person name="Galagan J.E."/>
            <person name="Asai K."/>
            <person name="Machida M."/>
            <person name="Hall N."/>
            <person name="Barrell B.G."/>
            <person name="Denning D.W."/>
        </authorList>
    </citation>
    <scope>NUCLEOTIDE SEQUENCE [LARGE SCALE GENOMIC DNA]</scope>
    <source>
        <strain>ATCC MYA-4609 / CBS 101355 / FGSC A1100 / Af293</strain>
    </source>
</reference>
<reference key="2">
    <citation type="journal article" date="2005" name="Med. Mycol.">
        <title>The ergosterol biosynthesis pathway, transporter genes, and azole resistance in Aspergillus fumigatus.</title>
        <authorList>
            <person name="Ferreira M.E."/>
            <person name="Colombo A.L."/>
            <person name="Paulsen I."/>
            <person name="Ren Q."/>
            <person name="Wortman J."/>
            <person name="Huang J."/>
            <person name="Goldman M.H."/>
            <person name="Goldman G.H."/>
        </authorList>
    </citation>
    <scope>IDENTIFICATION</scope>
    <scope>FUNCTION</scope>
    <scope>PATHWAY</scope>
</reference>
<reference key="3">
    <citation type="journal article" date="2008" name="Steroids">
        <title>Ergosterol biosynthesis pathway in Aspergillus fumigatus.</title>
        <authorList>
            <person name="Alcazar-Fuoli L."/>
            <person name="Mellado E."/>
            <person name="Garcia-Effron G."/>
            <person name="Lopez J.F."/>
            <person name="Grimalt J.O."/>
            <person name="Cuenca-Estrella J.M."/>
            <person name="Rodriguez-Tudela J.L."/>
        </authorList>
    </citation>
    <scope>FUNCTION</scope>
    <scope>PATHWAY</scope>
</reference>
<reference key="4">
    <citation type="journal article" date="2017" name="World J. Microbiol. Biotechnol.">
        <title>alpha-Bisabolol inhibits Aspergillus fumigatus Af239 growth via affecting microsomal delta24-sterol methyltransferase as a crucial enzyme in ergosterol biosynthesis pathway.</title>
        <authorList>
            <person name="Jahanshiri Z."/>
            <person name="Shams-Ghahfarokhi M."/>
            <person name="Asghari-Paskiabi F."/>
            <person name="Saghiri R."/>
            <person name="Razzaghi-Abyaneh M."/>
        </authorList>
    </citation>
    <scope>FUNCTION</scope>
    <scope>INDUCTION</scope>
    <scope>CATALYTIC ACTIVITY</scope>
    <scope>ACTIVITY REGULATION</scope>
</reference>
<gene>
    <name evidence="4" type="primary">erg6</name>
    <name type="ORF">AFUA_4G03630</name>
</gene>
<feature type="chain" id="PRO_0000442289" description="Sterol 24-C-methyltransferase erg6">
    <location>
        <begin position="1"/>
        <end position="377"/>
    </location>
</feature>